<dbReference type="EC" id="1.1.1.267" evidence="1"/>
<dbReference type="EMBL" id="CP000726">
    <property type="protein sequence ID" value="ABS35828.1"/>
    <property type="molecule type" value="Genomic_DNA"/>
</dbReference>
<dbReference type="RefSeq" id="WP_011986796.1">
    <property type="nucleotide sequence ID" value="NC_009697.1"/>
</dbReference>
<dbReference type="SMR" id="A7FW01"/>
<dbReference type="GeneID" id="5186681"/>
<dbReference type="KEGG" id="cba:CLB_2290"/>
<dbReference type="HOGENOM" id="CLU_035714_4_0_9"/>
<dbReference type="UniPathway" id="UPA00056">
    <property type="reaction ID" value="UER00092"/>
</dbReference>
<dbReference type="GO" id="GO:0030604">
    <property type="term" value="F:1-deoxy-D-xylulose-5-phosphate reductoisomerase activity"/>
    <property type="evidence" value="ECO:0007669"/>
    <property type="project" value="UniProtKB-UniRule"/>
</dbReference>
<dbReference type="GO" id="GO:0030145">
    <property type="term" value="F:manganese ion binding"/>
    <property type="evidence" value="ECO:0007669"/>
    <property type="project" value="TreeGrafter"/>
</dbReference>
<dbReference type="GO" id="GO:0070402">
    <property type="term" value="F:NADPH binding"/>
    <property type="evidence" value="ECO:0007669"/>
    <property type="project" value="InterPro"/>
</dbReference>
<dbReference type="GO" id="GO:0051484">
    <property type="term" value="P:isopentenyl diphosphate biosynthetic process, methylerythritol 4-phosphate pathway involved in terpenoid biosynthetic process"/>
    <property type="evidence" value="ECO:0007669"/>
    <property type="project" value="TreeGrafter"/>
</dbReference>
<dbReference type="FunFam" id="3.40.50.720:FF:000045">
    <property type="entry name" value="1-deoxy-D-xylulose 5-phosphate reductoisomerase"/>
    <property type="match status" value="1"/>
</dbReference>
<dbReference type="Gene3D" id="1.10.1740.10">
    <property type="match status" value="1"/>
</dbReference>
<dbReference type="Gene3D" id="3.40.50.720">
    <property type="entry name" value="NAD(P)-binding Rossmann-like Domain"/>
    <property type="match status" value="1"/>
</dbReference>
<dbReference type="HAMAP" id="MF_00183">
    <property type="entry name" value="DXP_reductoisom"/>
    <property type="match status" value="1"/>
</dbReference>
<dbReference type="InterPro" id="IPR003821">
    <property type="entry name" value="DXP_reductoisomerase"/>
</dbReference>
<dbReference type="InterPro" id="IPR013644">
    <property type="entry name" value="DXP_reductoisomerase_C"/>
</dbReference>
<dbReference type="InterPro" id="IPR013512">
    <property type="entry name" value="DXP_reductoisomerase_N"/>
</dbReference>
<dbReference type="InterPro" id="IPR026877">
    <property type="entry name" value="DXPR_C"/>
</dbReference>
<dbReference type="InterPro" id="IPR036169">
    <property type="entry name" value="DXPR_C_sf"/>
</dbReference>
<dbReference type="InterPro" id="IPR036291">
    <property type="entry name" value="NAD(P)-bd_dom_sf"/>
</dbReference>
<dbReference type="NCBIfam" id="TIGR00243">
    <property type="entry name" value="Dxr"/>
    <property type="match status" value="1"/>
</dbReference>
<dbReference type="NCBIfam" id="NF009114">
    <property type="entry name" value="PRK12464.1"/>
    <property type="match status" value="1"/>
</dbReference>
<dbReference type="PANTHER" id="PTHR30525">
    <property type="entry name" value="1-DEOXY-D-XYLULOSE 5-PHOSPHATE REDUCTOISOMERASE"/>
    <property type="match status" value="1"/>
</dbReference>
<dbReference type="PANTHER" id="PTHR30525:SF0">
    <property type="entry name" value="1-DEOXY-D-XYLULOSE 5-PHOSPHATE REDUCTOISOMERASE, CHLOROPLASTIC"/>
    <property type="match status" value="1"/>
</dbReference>
<dbReference type="Pfam" id="PF08436">
    <property type="entry name" value="DXP_redisom_C"/>
    <property type="match status" value="1"/>
</dbReference>
<dbReference type="Pfam" id="PF02670">
    <property type="entry name" value="DXP_reductoisom"/>
    <property type="match status" value="1"/>
</dbReference>
<dbReference type="Pfam" id="PF13288">
    <property type="entry name" value="DXPR_C"/>
    <property type="match status" value="1"/>
</dbReference>
<dbReference type="PIRSF" id="PIRSF006205">
    <property type="entry name" value="Dxp_reductismrs"/>
    <property type="match status" value="1"/>
</dbReference>
<dbReference type="SUPFAM" id="SSF69055">
    <property type="entry name" value="1-deoxy-D-xylulose-5-phosphate reductoisomerase, C-terminal domain"/>
    <property type="match status" value="1"/>
</dbReference>
<dbReference type="SUPFAM" id="SSF55347">
    <property type="entry name" value="Glyceraldehyde-3-phosphate dehydrogenase-like, C-terminal domain"/>
    <property type="match status" value="1"/>
</dbReference>
<dbReference type="SUPFAM" id="SSF51735">
    <property type="entry name" value="NAD(P)-binding Rossmann-fold domains"/>
    <property type="match status" value="1"/>
</dbReference>
<keyword id="KW-0414">Isoprene biosynthesis</keyword>
<keyword id="KW-0464">Manganese</keyword>
<keyword id="KW-0479">Metal-binding</keyword>
<keyword id="KW-0521">NADP</keyword>
<keyword id="KW-0560">Oxidoreductase</keyword>
<feature type="chain" id="PRO_1000020246" description="1-deoxy-D-xylulose 5-phosphate reductoisomerase">
    <location>
        <begin position="1"/>
        <end position="385"/>
    </location>
</feature>
<feature type="binding site" evidence="1">
    <location>
        <position position="10"/>
    </location>
    <ligand>
        <name>NADPH</name>
        <dbReference type="ChEBI" id="CHEBI:57783"/>
    </ligand>
</feature>
<feature type="binding site" evidence="1">
    <location>
        <position position="11"/>
    </location>
    <ligand>
        <name>NADPH</name>
        <dbReference type="ChEBI" id="CHEBI:57783"/>
    </ligand>
</feature>
<feature type="binding site" evidence="1">
    <location>
        <position position="12"/>
    </location>
    <ligand>
        <name>NADPH</name>
        <dbReference type="ChEBI" id="CHEBI:57783"/>
    </ligand>
</feature>
<feature type="binding site" evidence="1">
    <location>
        <position position="13"/>
    </location>
    <ligand>
        <name>NADPH</name>
        <dbReference type="ChEBI" id="CHEBI:57783"/>
    </ligand>
</feature>
<feature type="binding site" evidence="1">
    <location>
        <position position="37"/>
    </location>
    <ligand>
        <name>NADPH</name>
        <dbReference type="ChEBI" id="CHEBI:57783"/>
    </ligand>
</feature>
<feature type="binding site" evidence="1">
    <location>
        <position position="124"/>
    </location>
    <ligand>
        <name>NADPH</name>
        <dbReference type="ChEBI" id="CHEBI:57783"/>
    </ligand>
</feature>
<feature type="binding site" evidence="1">
    <location>
        <position position="125"/>
    </location>
    <ligand>
        <name>1-deoxy-D-xylulose 5-phosphate</name>
        <dbReference type="ChEBI" id="CHEBI:57792"/>
    </ligand>
</feature>
<feature type="binding site" evidence="1">
    <location>
        <position position="126"/>
    </location>
    <ligand>
        <name>NADPH</name>
        <dbReference type="ChEBI" id="CHEBI:57783"/>
    </ligand>
</feature>
<feature type="binding site" evidence="1">
    <location>
        <position position="150"/>
    </location>
    <ligand>
        <name>Mn(2+)</name>
        <dbReference type="ChEBI" id="CHEBI:29035"/>
    </ligand>
</feature>
<feature type="binding site" evidence="1">
    <location>
        <position position="151"/>
    </location>
    <ligand>
        <name>1-deoxy-D-xylulose 5-phosphate</name>
        <dbReference type="ChEBI" id="CHEBI:57792"/>
    </ligand>
</feature>
<feature type="binding site" evidence="1">
    <location>
        <position position="152"/>
    </location>
    <ligand>
        <name>1-deoxy-D-xylulose 5-phosphate</name>
        <dbReference type="ChEBI" id="CHEBI:57792"/>
    </ligand>
</feature>
<feature type="binding site" evidence="1">
    <location>
        <position position="152"/>
    </location>
    <ligand>
        <name>Mn(2+)</name>
        <dbReference type="ChEBI" id="CHEBI:29035"/>
    </ligand>
</feature>
<feature type="binding site" evidence="1">
    <location>
        <position position="176"/>
    </location>
    <ligand>
        <name>1-deoxy-D-xylulose 5-phosphate</name>
        <dbReference type="ChEBI" id="CHEBI:57792"/>
    </ligand>
</feature>
<feature type="binding site" evidence="1">
    <location>
        <position position="199"/>
    </location>
    <ligand>
        <name>1-deoxy-D-xylulose 5-phosphate</name>
        <dbReference type="ChEBI" id="CHEBI:57792"/>
    </ligand>
</feature>
<feature type="binding site" evidence="1">
    <location>
        <position position="205"/>
    </location>
    <ligand>
        <name>NADPH</name>
        <dbReference type="ChEBI" id="CHEBI:57783"/>
    </ligand>
</feature>
<feature type="binding site" evidence="1">
    <location>
        <position position="212"/>
    </location>
    <ligand>
        <name>1-deoxy-D-xylulose 5-phosphate</name>
        <dbReference type="ChEBI" id="CHEBI:57792"/>
    </ligand>
</feature>
<feature type="binding site" evidence="1">
    <location>
        <position position="217"/>
    </location>
    <ligand>
        <name>1-deoxy-D-xylulose 5-phosphate</name>
        <dbReference type="ChEBI" id="CHEBI:57792"/>
    </ligand>
</feature>
<feature type="binding site" evidence="1">
    <location>
        <position position="218"/>
    </location>
    <ligand>
        <name>1-deoxy-D-xylulose 5-phosphate</name>
        <dbReference type="ChEBI" id="CHEBI:57792"/>
    </ligand>
</feature>
<feature type="binding site" evidence="1">
    <location>
        <position position="221"/>
    </location>
    <ligand>
        <name>1-deoxy-D-xylulose 5-phosphate</name>
        <dbReference type="ChEBI" id="CHEBI:57792"/>
    </ligand>
</feature>
<feature type="binding site" evidence="1">
    <location>
        <position position="221"/>
    </location>
    <ligand>
        <name>Mn(2+)</name>
        <dbReference type="ChEBI" id="CHEBI:29035"/>
    </ligand>
</feature>
<name>DXR_CLOB1</name>
<organism>
    <name type="scientific">Clostridium botulinum (strain ATCC 19397 / Type A)</name>
    <dbReference type="NCBI Taxonomy" id="441770"/>
    <lineage>
        <taxon>Bacteria</taxon>
        <taxon>Bacillati</taxon>
        <taxon>Bacillota</taxon>
        <taxon>Clostridia</taxon>
        <taxon>Eubacteriales</taxon>
        <taxon>Clostridiaceae</taxon>
        <taxon>Clostridium</taxon>
    </lineage>
</organism>
<comment type="function">
    <text evidence="1">Catalyzes the NADPH-dependent rearrangement and reduction of 1-deoxy-D-xylulose-5-phosphate (DXP) to 2-C-methyl-D-erythritol 4-phosphate (MEP).</text>
</comment>
<comment type="catalytic activity">
    <reaction evidence="1">
        <text>2-C-methyl-D-erythritol 4-phosphate + NADP(+) = 1-deoxy-D-xylulose 5-phosphate + NADPH + H(+)</text>
        <dbReference type="Rhea" id="RHEA:13717"/>
        <dbReference type="ChEBI" id="CHEBI:15378"/>
        <dbReference type="ChEBI" id="CHEBI:57783"/>
        <dbReference type="ChEBI" id="CHEBI:57792"/>
        <dbReference type="ChEBI" id="CHEBI:58262"/>
        <dbReference type="ChEBI" id="CHEBI:58349"/>
        <dbReference type="EC" id="1.1.1.267"/>
    </reaction>
    <physiologicalReaction direction="right-to-left" evidence="1">
        <dbReference type="Rhea" id="RHEA:13719"/>
    </physiologicalReaction>
</comment>
<comment type="cofactor">
    <cofactor evidence="1">
        <name>Mg(2+)</name>
        <dbReference type="ChEBI" id="CHEBI:18420"/>
    </cofactor>
    <cofactor evidence="1">
        <name>Mn(2+)</name>
        <dbReference type="ChEBI" id="CHEBI:29035"/>
    </cofactor>
</comment>
<comment type="pathway">
    <text evidence="1">Isoprenoid biosynthesis; isopentenyl diphosphate biosynthesis via DXP pathway; isopentenyl diphosphate from 1-deoxy-D-xylulose 5-phosphate: step 1/6.</text>
</comment>
<comment type="similarity">
    <text evidence="1">Belongs to the DXR family.</text>
</comment>
<evidence type="ECO:0000255" key="1">
    <source>
        <dbReference type="HAMAP-Rule" id="MF_00183"/>
    </source>
</evidence>
<accession>A7FW01</accession>
<gene>
    <name evidence="1" type="primary">dxr</name>
    <name type="ordered locus">CLB_2290</name>
</gene>
<proteinExistence type="inferred from homology"/>
<sequence>MKNITILGATGSIGTQTLDVIRREKEELKLVAISANKSDKKVIEIIKEFKPKYAVLMEENAFKIVEDFCIDNKIDTKVLKGMEGMIYISTLEEVNTVVTSVVGMIGLVPTIKAIESGKDIALANKETLVVAGELVISKAKEHNVNILPVDSEHGAIFQCLRGNKKEEVKNIIVTASGGPFRGKKKEELIDVKPEHALKHPKWNMGRKISIDSATLMNKGLEVIEAHFLFGVDYENIKVVVHPQSIVHSMVEYKDGSVIAQMATPDMKLPIQYALNYPNRKESQIEPLDFYKISNLTFEKPDMDTFLPLKLAYEAGKKGGVMPAILNGANEVAVDLFLKGKIEFLQIGDLLQECMNKFYKSMEATLENVISVDKEVREYLGKKYDI</sequence>
<reference key="1">
    <citation type="journal article" date="2007" name="PLoS ONE">
        <title>Analysis of the neurotoxin complex genes in Clostridium botulinum A1-A4 and B1 strains: BoNT/A3, /Ba4 and /B1 clusters are located within plasmids.</title>
        <authorList>
            <person name="Smith T.J."/>
            <person name="Hill K.K."/>
            <person name="Foley B.T."/>
            <person name="Detter J.C."/>
            <person name="Munk A.C."/>
            <person name="Bruce D.C."/>
            <person name="Doggett N.A."/>
            <person name="Smith L.A."/>
            <person name="Marks J.D."/>
            <person name="Xie G."/>
            <person name="Brettin T.S."/>
        </authorList>
    </citation>
    <scope>NUCLEOTIDE SEQUENCE [LARGE SCALE GENOMIC DNA]</scope>
    <source>
        <strain>ATCC 19397 / Type A</strain>
    </source>
</reference>
<protein>
    <recommendedName>
        <fullName evidence="1">1-deoxy-D-xylulose 5-phosphate reductoisomerase</fullName>
        <shortName evidence="1">DXP reductoisomerase</shortName>
        <ecNumber evidence="1">1.1.1.267</ecNumber>
    </recommendedName>
    <alternativeName>
        <fullName evidence="1">1-deoxyxylulose-5-phosphate reductoisomerase</fullName>
    </alternativeName>
    <alternativeName>
        <fullName evidence="1">2-C-methyl-D-erythritol 4-phosphate synthase</fullName>
    </alternativeName>
</protein>